<feature type="chain" id="PRO_0000406237" description="FAD synthase">
    <location>
        <begin position="1"/>
        <end position="146"/>
    </location>
</feature>
<feature type="binding site" evidence="1">
    <location>
        <begin position="9"/>
        <end position="10"/>
    </location>
    <ligand>
        <name>ATP</name>
        <dbReference type="ChEBI" id="CHEBI:30616"/>
    </ligand>
</feature>
<feature type="binding site" evidence="1">
    <location>
        <begin position="14"/>
        <end position="17"/>
    </location>
    <ligand>
        <name>ATP</name>
        <dbReference type="ChEBI" id="CHEBI:30616"/>
    </ligand>
</feature>
<feature type="binding site" evidence="1">
    <location>
        <position position="92"/>
    </location>
    <ligand>
        <name>ATP</name>
        <dbReference type="ChEBI" id="CHEBI:30616"/>
    </ligand>
</feature>
<accession>B0R450</accession>
<name>RIBL_HALS3</name>
<protein>
    <recommendedName>
        <fullName evidence="1">FAD synthase</fullName>
        <ecNumber evidence="1">2.7.7.2</ecNumber>
    </recommendedName>
    <alternativeName>
        <fullName evidence="1">FMN adenylyltransferase</fullName>
    </alternativeName>
    <alternativeName>
        <fullName evidence="1">Flavin adenine dinucleotide synthase</fullName>
    </alternativeName>
</protein>
<gene>
    <name evidence="1" type="primary">ribL</name>
    <name type="ordered locus">OE_2139R</name>
</gene>
<organism>
    <name type="scientific">Halobacterium salinarum (strain ATCC 29341 / DSM 671 / R1)</name>
    <dbReference type="NCBI Taxonomy" id="478009"/>
    <lineage>
        <taxon>Archaea</taxon>
        <taxon>Methanobacteriati</taxon>
        <taxon>Methanobacteriota</taxon>
        <taxon>Stenosarchaea group</taxon>
        <taxon>Halobacteria</taxon>
        <taxon>Halobacteriales</taxon>
        <taxon>Halobacteriaceae</taxon>
        <taxon>Halobacterium</taxon>
        <taxon>Halobacterium salinarum NRC-34001</taxon>
    </lineage>
</organism>
<proteinExistence type="inferred from homology"/>
<dbReference type="EC" id="2.7.7.2" evidence="1"/>
<dbReference type="EMBL" id="AM774415">
    <property type="protein sequence ID" value="CAP13515.1"/>
    <property type="molecule type" value="Genomic_DNA"/>
</dbReference>
<dbReference type="RefSeq" id="WP_010902542.1">
    <property type="nucleotide sequence ID" value="NC_010364.1"/>
</dbReference>
<dbReference type="SMR" id="B0R450"/>
<dbReference type="EnsemblBacteria" id="CAP13515">
    <property type="protein sequence ID" value="CAP13515"/>
    <property type="gene ID" value="OE_2139R"/>
</dbReference>
<dbReference type="KEGG" id="hsl:OE_2139R"/>
<dbReference type="HOGENOM" id="CLU_034585_2_1_2"/>
<dbReference type="PhylomeDB" id="B0R450"/>
<dbReference type="UniPathway" id="UPA00277">
    <property type="reaction ID" value="UER00407"/>
</dbReference>
<dbReference type="Proteomes" id="UP000001321">
    <property type="component" value="Chromosome"/>
</dbReference>
<dbReference type="GO" id="GO:0005524">
    <property type="term" value="F:ATP binding"/>
    <property type="evidence" value="ECO:0007669"/>
    <property type="project" value="UniProtKB-UniRule"/>
</dbReference>
<dbReference type="GO" id="GO:0003919">
    <property type="term" value="F:FMN adenylyltransferase activity"/>
    <property type="evidence" value="ECO:0007669"/>
    <property type="project" value="UniProtKB-UniRule"/>
</dbReference>
<dbReference type="GO" id="GO:0006747">
    <property type="term" value="P:FAD biosynthetic process"/>
    <property type="evidence" value="ECO:0007669"/>
    <property type="project" value="UniProtKB-UniRule"/>
</dbReference>
<dbReference type="GO" id="GO:0046444">
    <property type="term" value="P:FMN metabolic process"/>
    <property type="evidence" value="ECO:0007669"/>
    <property type="project" value="UniProtKB-UniRule"/>
</dbReference>
<dbReference type="CDD" id="cd02170">
    <property type="entry name" value="cytidylyltransferase"/>
    <property type="match status" value="1"/>
</dbReference>
<dbReference type="Gene3D" id="3.40.50.620">
    <property type="entry name" value="HUPs"/>
    <property type="match status" value="1"/>
</dbReference>
<dbReference type="HAMAP" id="MF_02115">
    <property type="entry name" value="FAD_synth_arch"/>
    <property type="match status" value="1"/>
</dbReference>
<dbReference type="InterPro" id="IPR050385">
    <property type="entry name" value="Archaeal_FAD_synthase"/>
</dbReference>
<dbReference type="InterPro" id="IPR004821">
    <property type="entry name" value="Cyt_trans-like"/>
</dbReference>
<dbReference type="InterPro" id="IPR024902">
    <property type="entry name" value="FAD_synth_RibL"/>
</dbReference>
<dbReference type="InterPro" id="IPR014729">
    <property type="entry name" value="Rossmann-like_a/b/a_fold"/>
</dbReference>
<dbReference type="NCBIfam" id="TIGR00125">
    <property type="entry name" value="cyt_tran_rel"/>
    <property type="match status" value="1"/>
</dbReference>
<dbReference type="PANTHER" id="PTHR43793">
    <property type="entry name" value="FAD SYNTHASE"/>
    <property type="match status" value="1"/>
</dbReference>
<dbReference type="PANTHER" id="PTHR43793:SF1">
    <property type="entry name" value="FAD SYNTHASE"/>
    <property type="match status" value="1"/>
</dbReference>
<dbReference type="Pfam" id="PF01467">
    <property type="entry name" value="CTP_transf_like"/>
    <property type="match status" value="1"/>
</dbReference>
<dbReference type="SUPFAM" id="SSF52374">
    <property type="entry name" value="Nucleotidylyl transferase"/>
    <property type="match status" value="1"/>
</dbReference>
<evidence type="ECO:0000255" key="1">
    <source>
        <dbReference type="HAMAP-Rule" id="MF_02115"/>
    </source>
</evidence>
<keyword id="KW-0067">ATP-binding</keyword>
<keyword id="KW-0274">FAD</keyword>
<keyword id="KW-0285">Flavoprotein</keyword>
<keyword id="KW-0288">FMN</keyword>
<keyword id="KW-0547">Nucleotide-binding</keyword>
<keyword id="KW-0548">Nucleotidyltransferase</keyword>
<keyword id="KW-0808">Transferase</keyword>
<sequence length="146" mass="16002">MTRVVAQGTFDLIHPGHVHYLEDAAAMGDELHVILARRENVTHKDPPVLPNRQRRDVVAALDPVDHARIGHPEDIFAPIEAIDPDVIALGFDQHHDAAAIEAELADRGLDCAVERASPREARYDDEVLSSGDIADRVLAQRGDSDP</sequence>
<comment type="function">
    <text evidence="1">Catalyzes the transfer of the AMP portion of ATP to flavin mononucleotide (FMN) to produce flavin adenine dinucleotide (FAD) coenzyme.</text>
</comment>
<comment type="catalytic activity">
    <reaction evidence="1">
        <text>FMN + ATP + H(+) = FAD + diphosphate</text>
        <dbReference type="Rhea" id="RHEA:17237"/>
        <dbReference type="ChEBI" id="CHEBI:15378"/>
        <dbReference type="ChEBI" id="CHEBI:30616"/>
        <dbReference type="ChEBI" id="CHEBI:33019"/>
        <dbReference type="ChEBI" id="CHEBI:57692"/>
        <dbReference type="ChEBI" id="CHEBI:58210"/>
        <dbReference type="EC" id="2.7.7.2"/>
    </reaction>
</comment>
<comment type="cofactor">
    <cofactor evidence="1">
        <name>a divalent metal cation</name>
        <dbReference type="ChEBI" id="CHEBI:60240"/>
    </cofactor>
</comment>
<comment type="pathway">
    <text evidence="1">Cofactor biosynthesis; FAD biosynthesis; FAD from FMN: step 1/1.</text>
</comment>
<comment type="subunit">
    <text evidence="1">Homodimer.</text>
</comment>
<comment type="similarity">
    <text evidence="1">Belongs to the archaeal FAD synthase family.</text>
</comment>
<reference key="1">
    <citation type="journal article" date="2008" name="Genomics">
        <title>Evolution in the laboratory: the genome of Halobacterium salinarum strain R1 compared to that of strain NRC-1.</title>
        <authorList>
            <person name="Pfeiffer F."/>
            <person name="Schuster S.C."/>
            <person name="Broicher A."/>
            <person name="Falb M."/>
            <person name="Palm P."/>
            <person name="Rodewald K."/>
            <person name="Ruepp A."/>
            <person name="Soppa J."/>
            <person name="Tittor J."/>
            <person name="Oesterhelt D."/>
        </authorList>
    </citation>
    <scope>NUCLEOTIDE SEQUENCE [LARGE SCALE GENOMIC DNA]</scope>
    <source>
        <strain>ATCC 29341 / DSM 671 / R1</strain>
    </source>
</reference>